<dbReference type="EMBL" id="L42023">
    <property type="protein sequence ID" value="AAC22988.1"/>
    <property type="status" value="ALT_INIT"/>
    <property type="molecule type" value="Genomic_DNA"/>
</dbReference>
<dbReference type="PIR" id="H64117">
    <property type="entry name" value="H64117"/>
</dbReference>
<dbReference type="RefSeq" id="NP_439495.1">
    <property type="nucleotide sequence ID" value="NC_000907.1"/>
</dbReference>
<dbReference type="SMR" id="P45168"/>
<dbReference type="STRING" id="71421.HI_1344"/>
<dbReference type="EnsemblBacteria" id="AAC22988">
    <property type="protein sequence ID" value="AAC22988"/>
    <property type="gene ID" value="HI_1344"/>
</dbReference>
<dbReference type="KEGG" id="hin:HI_1344"/>
<dbReference type="PATRIC" id="fig|71421.8.peg.1396"/>
<dbReference type="eggNOG" id="COG0687">
    <property type="taxonomic scope" value="Bacteria"/>
</dbReference>
<dbReference type="HOGENOM" id="CLU_026974_1_3_6"/>
<dbReference type="OrthoDB" id="9769319at2"/>
<dbReference type="PhylomeDB" id="P45168"/>
<dbReference type="Proteomes" id="UP000000579">
    <property type="component" value="Chromosome"/>
</dbReference>
<dbReference type="GO" id="GO:0042597">
    <property type="term" value="C:periplasmic space"/>
    <property type="evidence" value="ECO:0007669"/>
    <property type="project" value="UniProtKB-SubCell"/>
</dbReference>
<dbReference type="GO" id="GO:0019808">
    <property type="term" value="F:polyamine binding"/>
    <property type="evidence" value="ECO:0007669"/>
    <property type="project" value="InterPro"/>
</dbReference>
<dbReference type="GO" id="GO:0015846">
    <property type="term" value="P:polyamine transport"/>
    <property type="evidence" value="ECO:0007669"/>
    <property type="project" value="InterPro"/>
</dbReference>
<dbReference type="Gene3D" id="3.40.190.10">
    <property type="entry name" value="Periplasmic binding protein-like II"/>
    <property type="match status" value="2"/>
</dbReference>
<dbReference type="InterPro" id="IPR006059">
    <property type="entry name" value="SBP"/>
</dbReference>
<dbReference type="InterPro" id="IPR001188">
    <property type="entry name" value="Sperm_putr-bd"/>
</dbReference>
<dbReference type="PANTHER" id="PTHR30222">
    <property type="entry name" value="SPERMIDINE/PUTRESCINE-BINDING PERIPLASMIC PROTEIN"/>
    <property type="match status" value="1"/>
</dbReference>
<dbReference type="PANTHER" id="PTHR30222:SF17">
    <property type="entry name" value="SPERMIDINE_PUTRESCINE-BINDING PERIPLASMIC PROTEIN"/>
    <property type="match status" value="1"/>
</dbReference>
<dbReference type="Pfam" id="PF13416">
    <property type="entry name" value="SBP_bac_8"/>
    <property type="match status" value="1"/>
</dbReference>
<dbReference type="PIRSF" id="PIRSF019574">
    <property type="entry name" value="Periplasmic_polyamine_BP"/>
    <property type="match status" value="1"/>
</dbReference>
<dbReference type="PRINTS" id="PR00909">
    <property type="entry name" value="SPERMDNBNDNG"/>
</dbReference>
<dbReference type="SUPFAM" id="SSF53850">
    <property type="entry name" value="Periplasmic binding protein-like II"/>
    <property type="match status" value="1"/>
</dbReference>
<sequence length="360" mass="39990">MKKFAGLITASFVAATLTACNDKDAKQETAKATAAANDTVYLYTWTEYVPDGLLDEFTKETGIKVIVSSLESNETMYAKLKTQGESGGYDVIAPSNYFVSKMAREGMLKELDHSKLPVLKELDPDWLNKPYDKGNKYSLPQLLGAPGIAFNTNTYKGEQFTSWADLWKPEFANKVQLLDDAREVFNIALLKIGQDPNTQDPAIIKQAYEELLKLRPNVLSFNSDNPANSFISGEVEVGQLWNGSVRIAKKEKAPLNMVFPKEGPVLWVDTLAIPATAKNSEGAHKLINYMLGKKTAEKLTLAIGYPTSNIEAKKALPKEITEDPAIYPSADILKNSHWQDDVGDAIQFYEQYYQELKAAK</sequence>
<evidence type="ECO:0000250" key="1"/>
<evidence type="ECO:0000255" key="2"/>
<evidence type="ECO:0000305" key="3"/>
<organism>
    <name type="scientific">Haemophilus influenzae (strain ATCC 51907 / DSM 11121 / KW20 / Rd)</name>
    <dbReference type="NCBI Taxonomy" id="71421"/>
    <lineage>
        <taxon>Bacteria</taxon>
        <taxon>Pseudomonadati</taxon>
        <taxon>Pseudomonadota</taxon>
        <taxon>Gammaproteobacteria</taxon>
        <taxon>Pasteurellales</taxon>
        <taxon>Pasteurellaceae</taxon>
        <taxon>Haemophilus</taxon>
    </lineage>
</organism>
<name>POTD1_HAEIN</name>
<feature type="signal peptide" evidence="2">
    <location>
        <begin position="1"/>
        <end position="16"/>
    </location>
</feature>
<feature type="chain" id="PRO_0000031840" description="Spermidine/putrescine-binding periplasmic protein 1">
    <location>
        <begin position="17"/>
        <end position="360"/>
    </location>
</feature>
<keyword id="KW-0574">Periplasm</keyword>
<keyword id="KW-1185">Reference proteome</keyword>
<keyword id="KW-0732">Signal</keyword>
<keyword id="KW-0813">Transport</keyword>
<accession>P45168</accession>
<comment type="function">
    <text evidence="1">Required for the activity of the bacterial periplasmic transport system of putrescine and spermidine. Polyamine binding protein (By similarity).</text>
</comment>
<comment type="subcellular location">
    <subcellularLocation>
        <location evidence="3">Periplasm</location>
    </subcellularLocation>
</comment>
<comment type="similarity">
    <text evidence="3">Belongs to the bacterial solute-binding protein PotD/PotF family.</text>
</comment>
<comment type="sequence caution" evidence="3">
    <conflict type="erroneous initiation">
        <sequence resource="EMBL-CDS" id="AAC22988"/>
    </conflict>
</comment>
<gene>
    <name type="primary">potD-B</name>
    <name type="ordered locus">HI_1344</name>
</gene>
<reference key="1">
    <citation type="journal article" date="1995" name="Science">
        <title>Whole-genome random sequencing and assembly of Haemophilus influenzae Rd.</title>
        <authorList>
            <person name="Fleischmann R.D."/>
            <person name="Adams M.D."/>
            <person name="White O."/>
            <person name="Clayton R.A."/>
            <person name="Kirkness E.F."/>
            <person name="Kerlavage A.R."/>
            <person name="Bult C.J."/>
            <person name="Tomb J.-F."/>
            <person name="Dougherty B.A."/>
            <person name="Merrick J.M."/>
            <person name="McKenney K."/>
            <person name="Sutton G.G."/>
            <person name="FitzHugh W."/>
            <person name="Fields C.A."/>
            <person name="Gocayne J.D."/>
            <person name="Scott J.D."/>
            <person name="Shirley R."/>
            <person name="Liu L.-I."/>
            <person name="Glodek A."/>
            <person name="Kelley J.M."/>
            <person name="Weidman J.F."/>
            <person name="Phillips C.A."/>
            <person name="Spriggs T."/>
            <person name="Hedblom E."/>
            <person name="Cotton M.D."/>
            <person name="Utterback T.R."/>
            <person name="Hanna M.C."/>
            <person name="Nguyen D.T."/>
            <person name="Saudek D.M."/>
            <person name="Brandon R.C."/>
            <person name="Fine L.D."/>
            <person name="Fritchman J.L."/>
            <person name="Fuhrmann J.L."/>
            <person name="Geoghagen N.S.M."/>
            <person name="Gnehm C.L."/>
            <person name="McDonald L.A."/>
            <person name="Small K.V."/>
            <person name="Fraser C.M."/>
            <person name="Smith H.O."/>
            <person name="Venter J.C."/>
        </authorList>
    </citation>
    <scope>NUCLEOTIDE SEQUENCE [LARGE SCALE GENOMIC DNA]</scope>
    <source>
        <strain>ATCC 51907 / DSM 11121 / KW20 / Rd</strain>
    </source>
</reference>
<protein>
    <recommendedName>
        <fullName>Spermidine/putrescine-binding periplasmic protein 1</fullName>
        <shortName>SPBP</shortName>
    </recommendedName>
</protein>
<proteinExistence type="inferred from homology"/>